<comment type="function">
    <text evidence="2">Hydroxycinnamoyl transferase that catalyzes the transfer of an acyl from p-coumaryol-CoA to spermidine, to produce coumaroyl spermidine. Can use feruloyl-CoA as acyl donor. Contributes to the natural variation of spermidine-based phenolamides in rice cultivars.</text>
</comment>
<comment type="similarity">
    <text evidence="3">Belongs to the plant acyltransferase family.</text>
</comment>
<gene>
    <name evidence="4" type="ordered locus">LOC_Os12g27220</name>
</gene>
<name>SHT1_ORYSJ</name>
<feature type="chain" id="PRO_0000437771" description="Spermidine hydroxycinnamoyltransferase 1">
    <location>
        <begin position="1"/>
        <end position="443"/>
    </location>
</feature>
<feature type="active site" description="Proton acceptor" evidence="1">
    <location>
        <position position="167"/>
    </location>
</feature>
<feature type="active site" description="Proton acceptor" evidence="1">
    <location>
        <position position="390"/>
    </location>
</feature>
<keyword id="KW-0012">Acyltransferase</keyword>
<keyword id="KW-0808">Transferase</keyword>
<dbReference type="EC" id="2.3.1.-" evidence="3"/>
<dbReference type="EMBL" id="DP000011">
    <property type="protein sequence ID" value="ABA98379.1"/>
    <property type="molecule type" value="Genomic_DNA"/>
</dbReference>
<dbReference type="SMR" id="Q2QRK9"/>
<dbReference type="GO" id="GO:0050734">
    <property type="term" value="F:hydroxycinnamoyltransferase activity"/>
    <property type="evidence" value="ECO:0000314"/>
    <property type="project" value="UniProtKB"/>
</dbReference>
<dbReference type="Gene3D" id="3.30.559.10">
    <property type="entry name" value="Chloramphenicol acetyltransferase-like domain"/>
    <property type="match status" value="2"/>
</dbReference>
<dbReference type="InterPro" id="IPR023213">
    <property type="entry name" value="CAT-like_dom_sf"/>
</dbReference>
<dbReference type="InterPro" id="IPR050898">
    <property type="entry name" value="Plant_acyltransferase"/>
</dbReference>
<dbReference type="PANTHER" id="PTHR31147">
    <property type="entry name" value="ACYL TRANSFERASE 4"/>
    <property type="match status" value="1"/>
</dbReference>
<dbReference type="PANTHER" id="PTHR31147:SF54">
    <property type="entry name" value="OS10G0105900 PROTEIN"/>
    <property type="match status" value="1"/>
</dbReference>
<dbReference type="Pfam" id="PF02458">
    <property type="entry name" value="Transferase"/>
    <property type="match status" value="1"/>
</dbReference>
<reference key="1">
    <citation type="journal article" date="2005" name="BMC Biol.">
        <title>The sequence of rice chromosomes 11 and 12, rich in disease resistance genes and recent gene duplications.</title>
        <authorList>
            <consortium name="The rice chromosomes 11 and 12 sequencing consortia"/>
        </authorList>
    </citation>
    <scope>NUCLEOTIDE SEQUENCE [LARGE SCALE GENOMIC DNA]</scope>
    <source>
        <strain>cv. Nipponbare</strain>
    </source>
</reference>
<reference key="2">
    <citation type="journal article" date="2015" name="Mol. Plant">
        <title>Spatiotemporal distribution of phenolamides and the genetics of natural variation of hydroxycinnamoyl spermidine in rice.</title>
        <authorList>
            <person name="Dong X."/>
            <person name="Gao Y."/>
            <person name="Chen W."/>
            <person name="Wang W."/>
            <person name="Gong L."/>
            <person name="Liu X."/>
            <person name="Luo J."/>
        </authorList>
    </citation>
    <scope>FUNCTION</scope>
</reference>
<proteinExistence type="inferred from homology"/>
<sequence>MKLDSFMVTRRGNPELVAPARATPRGTKPLSDLDDDWDLRYLQPCLEFFRAVDDGERRKPARPGDAIRAALAEALVYYYPIAGRLRELPKGGRLAVECTGEGVVFVEAEADVRIEDLGEPPLPTFRGAESFLCDVGDAGVVVGRPLFYMQITHLKCGGFVLGTHICHCIADAFGTLQFLKAIVDIARGEAKPTTLPVWEREHFVATSLPPNIKEEQEKLFDELENTTCDDIMVTMPAENMVSEYFTISQRDMIALRRHVPFNLTKTVTSFELLTAVLWRSRTMALGYKPCQIVRLMITVNARGRWKKLPLGYYGNGLLCPVIEITVNDLCTNSLGHTIELVRKAKHEMKTKENMQLMVDLLPLWREKPYIKVERIFETCDIKWIGQDTLDIGWAKRIGGGIPTVSLPDMTSYQFMCKNEKGDHILVFHTTNAVMHLPLVIKRK</sequence>
<organism>
    <name type="scientific">Oryza sativa subsp. japonica</name>
    <name type="common">Rice</name>
    <dbReference type="NCBI Taxonomy" id="39947"/>
    <lineage>
        <taxon>Eukaryota</taxon>
        <taxon>Viridiplantae</taxon>
        <taxon>Streptophyta</taxon>
        <taxon>Embryophyta</taxon>
        <taxon>Tracheophyta</taxon>
        <taxon>Spermatophyta</taxon>
        <taxon>Magnoliopsida</taxon>
        <taxon>Liliopsida</taxon>
        <taxon>Poales</taxon>
        <taxon>Poaceae</taxon>
        <taxon>BOP clade</taxon>
        <taxon>Oryzoideae</taxon>
        <taxon>Oryzeae</taxon>
        <taxon>Oryzinae</taxon>
        <taxon>Oryza</taxon>
        <taxon>Oryza sativa</taxon>
    </lineage>
</organism>
<protein>
    <recommendedName>
        <fullName evidence="3">Spermidine hydroxycinnamoyltransferase 1</fullName>
        <ecNumber evidence="3">2.3.1.-</ecNumber>
    </recommendedName>
</protein>
<evidence type="ECO:0000250" key="1">
    <source>
        <dbReference type="UniProtKB" id="Q8W1W9"/>
    </source>
</evidence>
<evidence type="ECO:0000269" key="2">
    <source>
    </source>
</evidence>
<evidence type="ECO:0000305" key="3"/>
<evidence type="ECO:0000312" key="4">
    <source>
        <dbReference type="EMBL" id="ABA98379.1"/>
    </source>
</evidence>
<accession>Q2QRK9</accession>